<proteinExistence type="inferred from homology"/>
<dbReference type="EC" id="3.1.3.16"/>
<dbReference type="EMBL" id="CH933806">
    <property type="protein sequence ID" value="EDW16253.1"/>
    <property type="molecule type" value="Genomic_DNA"/>
</dbReference>
<dbReference type="RefSeq" id="XP_002000792.1">
    <property type="nucleotide sequence ID" value="XM_002000756.2"/>
</dbReference>
<dbReference type="SMR" id="B4K616"/>
<dbReference type="FunCoup" id="B4K616">
    <property type="interactions" value="91"/>
</dbReference>
<dbReference type="EnsemblMetazoa" id="FBtr0173054">
    <property type="protein sequence ID" value="FBpp0171546"/>
    <property type="gene ID" value="FBgn0145057"/>
</dbReference>
<dbReference type="KEGG" id="dmo:Dmoj_GI22329"/>
<dbReference type="eggNOG" id="KOG1379">
    <property type="taxonomic scope" value="Eukaryota"/>
</dbReference>
<dbReference type="HOGENOM" id="CLU_029404_3_0_1"/>
<dbReference type="InParanoid" id="B4K616"/>
<dbReference type="OMA" id="DSWFVSS"/>
<dbReference type="OrthoDB" id="60843at2759"/>
<dbReference type="PhylomeDB" id="B4K616"/>
<dbReference type="Proteomes" id="UP000009192">
    <property type="component" value="Unassembled WGS sequence"/>
</dbReference>
<dbReference type="GO" id="GO:0005739">
    <property type="term" value="C:mitochondrion"/>
    <property type="evidence" value="ECO:0007669"/>
    <property type="project" value="TreeGrafter"/>
</dbReference>
<dbReference type="GO" id="GO:0046872">
    <property type="term" value="F:metal ion binding"/>
    <property type="evidence" value="ECO:0007669"/>
    <property type="project" value="UniProtKB-KW"/>
</dbReference>
<dbReference type="GO" id="GO:0004722">
    <property type="term" value="F:protein serine/threonine phosphatase activity"/>
    <property type="evidence" value="ECO:0000250"/>
    <property type="project" value="UniProtKB"/>
</dbReference>
<dbReference type="GO" id="GO:0016311">
    <property type="term" value="P:dephosphorylation"/>
    <property type="evidence" value="ECO:0000250"/>
    <property type="project" value="UniProtKB"/>
</dbReference>
<dbReference type="CDD" id="cd00143">
    <property type="entry name" value="PP2Cc"/>
    <property type="match status" value="1"/>
</dbReference>
<dbReference type="FunFam" id="3.60.40.10:FF:000009">
    <property type="entry name" value="Blast:Protein phosphatase PTC7 homolog"/>
    <property type="match status" value="1"/>
</dbReference>
<dbReference type="Gene3D" id="3.60.40.10">
    <property type="entry name" value="PPM-type phosphatase domain"/>
    <property type="match status" value="1"/>
</dbReference>
<dbReference type="InterPro" id="IPR036457">
    <property type="entry name" value="PPM-type-like_dom_sf"/>
</dbReference>
<dbReference type="InterPro" id="IPR001932">
    <property type="entry name" value="PPM-type_phosphatase-like_dom"/>
</dbReference>
<dbReference type="InterPro" id="IPR039123">
    <property type="entry name" value="PPTC7"/>
</dbReference>
<dbReference type="PANTHER" id="PTHR12320">
    <property type="entry name" value="PROTEIN PHOSPHATASE 2C"/>
    <property type="match status" value="1"/>
</dbReference>
<dbReference type="PANTHER" id="PTHR12320:SF1">
    <property type="entry name" value="PROTEIN PHOSPHATASE PTC7 HOMOLOG"/>
    <property type="match status" value="1"/>
</dbReference>
<dbReference type="Pfam" id="PF07228">
    <property type="entry name" value="SpoIIE"/>
    <property type="match status" value="1"/>
</dbReference>
<dbReference type="SMART" id="SM00331">
    <property type="entry name" value="PP2C_SIG"/>
    <property type="match status" value="1"/>
</dbReference>
<dbReference type="SMART" id="SM00332">
    <property type="entry name" value="PP2Cc"/>
    <property type="match status" value="1"/>
</dbReference>
<dbReference type="SUPFAM" id="SSF81606">
    <property type="entry name" value="PP2C-like"/>
    <property type="match status" value="1"/>
</dbReference>
<dbReference type="PROSITE" id="PS51746">
    <property type="entry name" value="PPM_2"/>
    <property type="match status" value="1"/>
</dbReference>
<evidence type="ECO:0000250" key="1">
    <source>
        <dbReference type="UniProtKB" id="P35813"/>
    </source>
</evidence>
<evidence type="ECO:0000250" key="2">
    <source>
        <dbReference type="UniProtKB" id="Q9VAH4"/>
    </source>
</evidence>
<evidence type="ECO:0000255" key="3"/>
<evidence type="ECO:0000255" key="4">
    <source>
        <dbReference type="PROSITE-ProRule" id="PRU01082"/>
    </source>
</evidence>
<evidence type="ECO:0000305" key="5"/>
<evidence type="ECO:0000312" key="6">
    <source>
        <dbReference type="EMBL" id="EDW16253.1"/>
    </source>
</evidence>
<name>PTC71_DROMO</name>
<comment type="catalytic activity">
    <reaction>
        <text>O-phospho-L-seryl-[protein] + H2O = L-seryl-[protein] + phosphate</text>
        <dbReference type="Rhea" id="RHEA:20629"/>
        <dbReference type="Rhea" id="RHEA-COMP:9863"/>
        <dbReference type="Rhea" id="RHEA-COMP:11604"/>
        <dbReference type="ChEBI" id="CHEBI:15377"/>
        <dbReference type="ChEBI" id="CHEBI:29999"/>
        <dbReference type="ChEBI" id="CHEBI:43474"/>
        <dbReference type="ChEBI" id="CHEBI:83421"/>
        <dbReference type="EC" id="3.1.3.16"/>
    </reaction>
</comment>
<comment type="catalytic activity">
    <reaction>
        <text>O-phospho-L-threonyl-[protein] + H2O = L-threonyl-[protein] + phosphate</text>
        <dbReference type="Rhea" id="RHEA:47004"/>
        <dbReference type="Rhea" id="RHEA-COMP:11060"/>
        <dbReference type="Rhea" id="RHEA-COMP:11605"/>
        <dbReference type="ChEBI" id="CHEBI:15377"/>
        <dbReference type="ChEBI" id="CHEBI:30013"/>
        <dbReference type="ChEBI" id="CHEBI:43474"/>
        <dbReference type="ChEBI" id="CHEBI:61977"/>
        <dbReference type="EC" id="3.1.3.16"/>
    </reaction>
</comment>
<comment type="cofactor">
    <cofactor evidence="1 5">
        <name>Mg(2+)</name>
        <dbReference type="ChEBI" id="CHEBI:18420"/>
    </cofactor>
    <cofactor evidence="1 5">
        <name>Mn(2+)</name>
        <dbReference type="ChEBI" id="CHEBI:29035"/>
    </cofactor>
</comment>
<comment type="similarity">
    <text evidence="3">Belongs to the PP2C family.</text>
</comment>
<keyword id="KW-0378">Hydrolase</keyword>
<keyword id="KW-0460">Magnesium</keyword>
<keyword id="KW-0464">Manganese</keyword>
<keyword id="KW-0479">Metal-binding</keyword>
<keyword id="KW-0904">Protein phosphatase</keyword>
<keyword id="KW-1185">Reference proteome</keyword>
<feature type="chain" id="PRO_0000377399" description="Protein phosphatase PTC7 homolog fig">
    <location>
        <begin position="1"/>
        <end position="312"/>
    </location>
</feature>
<feature type="domain" description="PPM-type phosphatase" evidence="4">
    <location>
        <begin position="42"/>
        <end position="306"/>
    </location>
</feature>
<feature type="binding site" evidence="1">
    <location>
        <position position="83"/>
    </location>
    <ligand>
        <name>Mn(2+)</name>
        <dbReference type="ChEBI" id="CHEBI:29035"/>
        <label>1</label>
    </ligand>
</feature>
<feature type="binding site" evidence="1">
    <location>
        <position position="83"/>
    </location>
    <ligand>
        <name>Mn(2+)</name>
        <dbReference type="ChEBI" id="CHEBI:29035"/>
        <label>2</label>
    </ligand>
</feature>
<feature type="binding site" evidence="1">
    <location>
        <position position="84"/>
    </location>
    <ligand>
        <name>Mn(2+)</name>
        <dbReference type="ChEBI" id="CHEBI:29035"/>
        <label>1</label>
    </ligand>
</feature>
<feature type="binding site" evidence="1">
    <location>
        <position position="228"/>
    </location>
    <ligand>
        <name>Mn(2+)</name>
        <dbReference type="ChEBI" id="CHEBI:29035"/>
        <label>2</label>
    </ligand>
</feature>
<sequence length="312" mass="34487">MFFTVRNLSNRTSQVVNYAYIQYRLLSSTTKTKGLPRLIKAIQGSSKDQLADDHLHMIDDHRYGEDSWFVSSTPKAETMGVADGVGGWRRLGIDSGLFAQELMTNCSEFAEQPQYDGSDPRQLLIDSFDQMKKMSGKVCGSSTACLVTLHRRDCTLHSANLGDSGFMVLRNGKVLHRSDEQLHGFNTPYQLTVAPEPGMDCILCDSPQQAVTSHINVQQGDLVLLATDGLFDNVPESMLVRHLQPLHGETRMEHLQHAVNRLVDMAKTLSLSNTFQSPFALKAKASNMNYGVGGKPDDITVILASVDVPDKD</sequence>
<gene>
    <name evidence="2" type="primary">fig</name>
    <name type="ORF">GI22329</name>
</gene>
<protein>
    <recommendedName>
        <fullName>Protein phosphatase PTC7 homolog fig</fullName>
    </recommendedName>
    <alternativeName>
        <fullName>Fos intronic gene protein</fullName>
        <ecNumber>3.1.3.16</ecNumber>
    </alternativeName>
</protein>
<reference evidence="6" key="1">
    <citation type="journal article" date="2007" name="Nature">
        <title>Evolution of genes and genomes on the Drosophila phylogeny.</title>
        <authorList>
            <consortium name="Drosophila 12 genomes consortium"/>
        </authorList>
    </citation>
    <scope>NUCLEOTIDE SEQUENCE [LARGE SCALE GENOMIC DNA]</scope>
    <source>
        <strain evidence="6">Tucson 15081-1352.22</strain>
    </source>
</reference>
<accession>B4K616</accession>
<organism>
    <name type="scientific">Drosophila mojavensis</name>
    <name type="common">Fruit fly</name>
    <dbReference type="NCBI Taxonomy" id="7230"/>
    <lineage>
        <taxon>Eukaryota</taxon>
        <taxon>Metazoa</taxon>
        <taxon>Ecdysozoa</taxon>
        <taxon>Arthropoda</taxon>
        <taxon>Hexapoda</taxon>
        <taxon>Insecta</taxon>
        <taxon>Pterygota</taxon>
        <taxon>Neoptera</taxon>
        <taxon>Endopterygota</taxon>
        <taxon>Diptera</taxon>
        <taxon>Brachycera</taxon>
        <taxon>Muscomorpha</taxon>
        <taxon>Ephydroidea</taxon>
        <taxon>Drosophilidae</taxon>
        <taxon>Drosophila</taxon>
    </lineage>
</organism>